<dbReference type="EMBL" id="AE000516">
    <property type="protein sequence ID" value="AAK44714.1"/>
    <property type="molecule type" value="Genomic_DNA"/>
</dbReference>
<dbReference type="PIR" id="F70829">
    <property type="entry name" value="F70829"/>
</dbReference>
<dbReference type="RefSeq" id="WP_003402335.1">
    <property type="nucleotide sequence ID" value="NZ_KK341227.1"/>
</dbReference>
<dbReference type="SMR" id="P9WMH8"/>
<dbReference type="KEGG" id="mtc:MT0491"/>
<dbReference type="PATRIC" id="fig|83331.31.peg.521"/>
<dbReference type="HOGENOM" id="CLU_074072_3_1_11"/>
<dbReference type="Proteomes" id="UP000001020">
    <property type="component" value="Chromosome"/>
</dbReference>
<dbReference type="GO" id="GO:0005829">
    <property type="term" value="C:cytosol"/>
    <property type="evidence" value="ECO:0007669"/>
    <property type="project" value="TreeGrafter"/>
</dbReference>
<dbReference type="GO" id="GO:0003677">
    <property type="term" value="F:DNA binding"/>
    <property type="evidence" value="ECO:0007669"/>
    <property type="project" value="UniProtKB-KW"/>
</dbReference>
<dbReference type="GO" id="GO:0003700">
    <property type="term" value="F:DNA-binding transcription factor activity"/>
    <property type="evidence" value="ECO:0007669"/>
    <property type="project" value="TreeGrafter"/>
</dbReference>
<dbReference type="CDD" id="cd00093">
    <property type="entry name" value="HTH_XRE"/>
    <property type="match status" value="1"/>
</dbReference>
<dbReference type="FunFam" id="1.10.260.40:FF:000032">
    <property type="entry name" value="Transcriptional regulator ClgR"/>
    <property type="match status" value="1"/>
</dbReference>
<dbReference type="Gene3D" id="1.10.260.40">
    <property type="entry name" value="lambda repressor-like DNA-binding domains"/>
    <property type="match status" value="1"/>
</dbReference>
<dbReference type="InterPro" id="IPR050807">
    <property type="entry name" value="Bact_TransReg_Diox"/>
</dbReference>
<dbReference type="InterPro" id="IPR001387">
    <property type="entry name" value="Cro/C1-type_HTH"/>
</dbReference>
<dbReference type="InterPro" id="IPR010982">
    <property type="entry name" value="Lambda_DNA-bd_dom_sf"/>
</dbReference>
<dbReference type="PANTHER" id="PTHR46797">
    <property type="entry name" value="HTH-TYPE TRANSCRIPTIONAL REGULATOR"/>
    <property type="match status" value="1"/>
</dbReference>
<dbReference type="PANTHER" id="PTHR46797:SF1">
    <property type="entry name" value="METHYLPHOSPHONATE SYNTHASE"/>
    <property type="match status" value="1"/>
</dbReference>
<dbReference type="Pfam" id="PF01381">
    <property type="entry name" value="HTH_3"/>
    <property type="match status" value="1"/>
</dbReference>
<dbReference type="SMART" id="SM00530">
    <property type="entry name" value="HTH_XRE"/>
    <property type="match status" value="1"/>
</dbReference>
<dbReference type="SUPFAM" id="SSF47413">
    <property type="entry name" value="lambda repressor-like DNA-binding domains"/>
    <property type="match status" value="1"/>
</dbReference>
<dbReference type="PROSITE" id="PS50943">
    <property type="entry name" value="HTH_CROC1"/>
    <property type="match status" value="1"/>
</dbReference>
<organism>
    <name type="scientific">Mycobacterium tuberculosis (strain CDC 1551 / Oshkosh)</name>
    <dbReference type="NCBI Taxonomy" id="83331"/>
    <lineage>
        <taxon>Bacteria</taxon>
        <taxon>Bacillati</taxon>
        <taxon>Actinomycetota</taxon>
        <taxon>Actinomycetes</taxon>
        <taxon>Mycobacteriales</taxon>
        <taxon>Mycobacteriaceae</taxon>
        <taxon>Mycobacterium</taxon>
        <taxon>Mycobacterium tuberculosis complex</taxon>
    </lineage>
</organism>
<protein>
    <recommendedName>
        <fullName>Uncharacterized HTH-type transcriptional regulator MT0491</fullName>
    </recommendedName>
</protein>
<evidence type="ECO:0000255" key="1">
    <source>
        <dbReference type="PROSITE-ProRule" id="PRU00257"/>
    </source>
</evidence>
<feature type="chain" id="PRO_0000427301" description="Uncharacterized HTH-type transcriptional regulator MT0491">
    <location>
        <begin position="1"/>
        <end position="140"/>
    </location>
</feature>
<feature type="domain" description="HTH cro/C1-type" evidence="1">
    <location>
        <begin position="26"/>
        <end position="80"/>
    </location>
</feature>
<feature type="DNA-binding region" description="H-T-H motif" evidence="1">
    <location>
        <begin position="37"/>
        <end position="56"/>
    </location>
</feature>
<proteinExistence type="predicted"/>
<reference key="1">
    <citation type="journal article" date="2002" name="J. Bacteriol.">
        <title>Whole-genome comparison of Mycobacterium tuberculosis clinical and laboratory strains.</title>
        <authorList>
            <person name="Fleischmann R.D."/>
            <person name="Alland D."/>
            <person name="Eisen J.A."/>
            <person name="Carpenter L."/>
            <person name="White O."/>
            <person name="Peterson J.D."/>
            <person name="DeBoy R.T."/>
            <person name="Dodson R.J."/>
            <person name="Gwinn M.L."/>
            <person name="Haft D.H."/>
            <person name="Hickey E.K."/>
            <person name="Kolonay J.F."/>
            <person name="Nelson W.C."/>
            <person name="Umayam L.A."/>
            <person name="Ermolaeva M.D."/>
            <person name="Salzberg S.L."/>
            <person name="Delcher A."/>
            <person name="Utterback T.R."/>
            <person name="Weidman J.F."/>
            <person name="Khouri H.M."/>
            <person name="Gill J."/>
            <person name="Mikula A."/>
            <person name="Bishai W."/>
            <person name="Jacobs W.R. Jr."/>
            <person name="Venter J.C."/>
            <person name="Fraser C.M."/>
        </authorList>
    </citation>
    <scope>NUCLEOTIDE SEQUENCE [LARGE SCALE GENOMIC DNA]</scope>
    <source>
        <strain>CDC 1551 / Oshkosh</strain>
    </source>
</reference>
<gene>
    <name type="ordered locus">MT0491</name>
</gene>
<name>Y474_MYCTO</name>
<sequence length="140" mass="15364">MSSEEKLAAKVSTKASDVASDIGSFIRSQRETAHVSMRQLAERSGVSNPYLSQVERGLRKPSADVLSQIAKALRVSAEVLYVRAGILEPSETSQVRDAIITDTAITERQKQILLDIYASFTHQNEATREECPSDPTPTDD</sequence>
<keyword id="KW-0238">DNA-binding</keyword>
<keyword id="KW-1185">Reference proteome</keyword>
<keyword id="KW-0804">Transcription</keyword>
<keyword id="KW-0805">Transcription regulation</keyword>
<accession>P9WMH8</accession>
<accession>L0T6K7</accession>
<accession>O53759</accession>
<accession>Q7D9R1</accession>